<comment type="function">
    <text evidence="1">Catalyzes the anti-1,4-elimination of the C-3 phosphate and the C-6 proR hydrogen from 5-enolpyruvylshikimate-3-phosphate (EPSP) to yield chorismate, which is the branch point compound that serves as the starting substrate for the three terminal pathways of aromatic amino acid biosynthesis. This reaction introduces a second double bond into the aromatic ring system.</text>
</comment>
<comment type="catalytic activity">
    <reaction evidence="1">
        <text>5-O-(1-carboxyvinyl)-3-phosphoshikimate = chorismate + phosphate</text>
        <dbReference type="Rhea" id="RHEA:21020"/>
        <dbReference type="ChEBI" id="CHEBI:29748"/>
        <dbReference type="ChEBI" id="CHEBI:43474"/>
        <dbReference type="ChEBI" id="CHEBI:57701"/>
        <dbReference type="EC" id="4.2.3.5"/>
    </reaction>
</comment>
<comment type="cofactor">
    <cofactor evidence="1">
        <name>FMNH2</name>
        <dbReference type="ChEBI" id="CHEBI:57618"/>
    </cofactor>
    <text evidence="1">Reduced FMN (FMNH(2)).</text>
</comment>
<comment type="pathway">
    <text evidence="1">Metabolic intermediate biosynthesis; chorismate biosynthesis; chorismate from D-erythrose 4-phosphate and phosphoenolpyruvate: step 7/7.</text>
</comment>
<comment type="subunit">
    <text evidence="1">Homotetramer.</text>
</comment>
<comment type="similarity">
    <text evidence="1">Belongs to the chorismate synthase family.</text>
</comment>
<dbReference type="EC" id="4.2.3.5" evidence="1"/>
<dbReference type="EMBL" id="CU928145">
    <property type="protein sequence ID" value="CAU98441.1"/>
    <property type="molecule type" value="Genomic_DNA"/>
</dbReference>
<dbReference type="RefSeq" id="WP_000918470.1">
    <property type="nucleotide sequence ID" value="NC_011748.1"/>
</dbReference>
<dbReference type="SMR" id="B7LBI3"/>
<dbReference type="GeneID" id="93774846"/>
<dbReference type="KEGG" id="eck:EC55989_2573"/>
<dbReference type="HOGENOM" id="CLU_034547_0_2_6"/>
<dbReference type="UniPathway" id="UPA00053">
    <property type="reaction ID" value="UER00090"/>
</dbReference>
<dbReference type="Proteomes" id="UP000000746">
    <property type="component" value="Chromosome"/>
</dbReference>
<dbReference type="GO" id="GO:0005829">
    <property type="term" value="C:cytosol"/>
    <property type="evidence" value="ECO:0007669"/>
    <property type="project" value="TreeGrafter"/>
</dbReference>
<dbReference type="GO" id="GO:0004107">
    <property type="term" value="F:chorismate synthase activity"/>
    <property type="evidence" value="ECO:0007669"/>
    <property type="project" value="UniProtKB-UniRule"/>
</dbReference>
<dbReference type="GO" id="GO:0010181">
    <property type="term" value="F:FMN binding"/>
    <property type="evidence" value="ECO:0007669"/>
    <property type="project" value="TreeGrafter"/>
</dbReference>
<dbReference type="GO" id="GO:0008652">
    <property type="term" value="P:amino acid biosynthetic process"/>
    <property type="evidence" value="ECO:0007669"/>
    <property type="project" value="UniProtKB-KW"/>
</dbReference>
<dbReference type="GO" id="GO:0009073">
    <property type="term" value="P:aromatic amino acid family biosynthetic process"/>
    <property type="evidence" value="ECO:0007669"/>
    <property type="project" value="UniProtKB-KW"/>
</dbReference>
<dbReference type="GO" id="GO:0009423">
    <property type="term" value="P:chorismate biosynthetic process"/>
    <property type="evidence" value="ECO:0007669"/>
    <property type="project" value="UniProtKB-UniRule"/>
</dbReference>
<dbReference type="CDD" id="cd07304">
    <property type="entry name" value="Chorismate_synthase"/>
    <property type="match status" value="1"/>
</dbReference>
<dbReference type="FunFam" id="3.60.150.10:FF:000001">
    <property type="entry name" value="Chorismate synthase"/>
    <property type="match status" value="1"/>
</dbReference>
<dbReference type="Gene3D" id="3.60.150.10">
    <property type="entry name" value="Chorismate synthase AroC"/>
    <property type="match status" value="1"/>
</dbReference>
<dbReference type="HAMAP" id="MF_00300">
    <property type="entry name" value="Chorismate_synth"/>
    <property type="match status" value="1"/>
</dbReference>
<dbReference type="InterPro" id="IPR000453">
    <property type="entry name" value="Chorismate_synth"/>
</dbReference>
<dbReference type="InterPro" id="IPR035904">
    <property type="entry name" value="Chorismate_synth_AroC_sf"/>
</dbReference>
<dbReference type="InterPro" id="IPR020541">
    <property type="entry name" value="Chorismate_synthase_CS"/>
</dbReference>
<dbReference type="NCBIfam" id="TIGR00033">
    <property type="entry name" value="aroC"/>
    <property type="match status" value="1"/>
</dbReference>
<dbReference type="NCBIfam" id="NF003793">
    <property type="entry name" value="PRK05382.1"/>
    <property type="match status" value="1"/>
</dbReference>
<dbReference type="PANTHER" id="PTHR21085">
    <property type="entry name" value="CHORISMATE SYNTHASE"/>
    <property type="match status" value="1"/>
</dbReference>
<dbReference type="PANTHER" id="PTHR21085:SF0">
    <property type="entry name" value="CHORISMATE SYNTHASE"/>
    <property type="match status" value="1"/>
</dbReference>
<dbReference type="Pfam" id="PF01264">
    <property type="entry name" value="Chorismate_synt"/>
    <property type="match status" value="1"/>
</dbReference>
<dbReference type="PIRSF" id="PIRSF001456">
    <property type="entry name" value="Chorismate_synth"/>
    <property type="match status" value="1"/>
</dbReference>
<dbReference type="SUPFAM" id="SSF103263">
    <property type="entry name" value="Chorismate synthase, AroC"/>
    <property type="match status" value="1"/>
</dbReference>
<dbReference type="PROSITE" id="PS00787">
    <property type="entry name" value="CHORISMATE_SYNTHASE_1"/>
    <property type="match status" value="1"/>
</dbReference>
<dbReference type="PROSITE" id="PS00788">
    <property type="entry name" value="CHORISMATE_SYNTHASE_2"/>
    <property type="match status" value="1"/>
</dbReference>
<dbReference type="PROSITE" id="PS00789">
    <property type="entry name" value="CHORISMATE_SYNTHASE_3"/>
    <property type="match status" value="1"/>
</dbReference>
<evidence type="ECO:0000255" key="1">
    <source>
        <dbReference type="HAMAP-Rule" id="MF_00300"/>
    </source>
</evidence>
<feature type="chain" id="PRO_1000132770" description="Chorismate synthase">
    <location>
        <begin position="1"/>
        <end position="361"/>
    </location>
</feature>
<feature type="binding site" evidence="1">
    <location>
        <position position="48"/>
    </location>
    <ligand>
        <name>NADP(+)</name>
        <dbReference type="ChEBI" id="CHEBI:58349"/>
    </ligand>
</feature>
<feature type="binding site" evidence="1">
    <location>
        <position position="54"/>
    </location>
    <ligand>
        <name>NADP(+)</name>
        <dbReference type="ChEBI" id="CHEBI:58349"/>
    </ligand>
</feature>
<feature type="binding site" evidence="1">
    <location>
        <begin position="125"/>
        <end position="127"/>
    </location>
    <ligand>
        <name>FMN</name>
        <dbReference type="ChEBI" id="CHEBI:58210"/>
    </ligand>
</feature>
<feature type="binding site" evidence="1">
    <location>
        <begin position="238"/>
        <end position="239"/>
    </location>
    <ligand>
        <name>FMN</name>
        <dbReference type="ChEBI" id="CHEBI:58210"/>
    </ligand>
</feature>
<feature type="binding site" evidence="1">
    <location>
        <position position="278"/>
    </location>
    <ligand>
        <name>FMN</name>
        <dbReference type="ChEBI" id="CHEBI:58210"/>
    </ligand>
</feature>
<feature type="binding site" evidence="1">
    <location>
        <begin position="293"/>
        <end position="297"/>
    </location>
    <ligand>
        <name>FMN</name>
        <dbReference type="ChEBI" id="CHEBI:58210"/>
    </ligand>
</feature>
<feature type="binding site" evidence="1">
    <location>
        <position position="319"/>
    </location>
    <ligand>
        <name>FMN</name>
        <dbReference type="ChEBI" id="CHEBI:58210"/>
    </ligand>
</feature>
<accession>B7LBI3</accession>
<proteinExistence type="inferred from homology"/>
<gene>
    <name evidence="1" type="primary">aroC</name>
    <name type="ordered locus">EC55989_2573</name>
</gene>
<protein>
    <recommendedName>
        <fullName evidence="1">Chorismate synthase</fullName>
        <shortName evidence="1">CS</shortName>
        <ecNumber evidence="1">4.2.3.5</ecNumber>
    </recommendedName>
    <alternativeName>
        <fullName evidence="1">5-enolpyruvylshikimate-3-phosphate phospholyase</fullName>
    </alternativeName>
</protein>
<keyword id="KW-0028">Amino-acid biosynthesis</keyword>
<keyword id="KW-0057">Aromatic amino acid biosynthesis</keyword>
<keyword id="KW-0274">FAD</keyword>
<keyword id="KW-0285">Flavoprotein</keyword>
<keyword id="KW-0288">FMN</keyword>
<keyword id="KW-0456">Lyase</keyword>
<keyword id="KW-0521">NADP</keyword>
<keyword id="KW-1185">Reference proteome</keyword>
<sequence>MAGNTIGQLFRVTTFGESHGLALGCIVDGVPPGIPLTEADLQHDLDRRRPGTSRYTTQRREPDQVKILSGVFEGVTTGTSIGLLIENTDQRSQDYSAIKDVFRPGHADYTYEQKYGLRDYRGGGRSSARETAMRVAAGAIAKKYLAEKFGIEIRGCLTQMGDIPLEIKDWSLVEQNPFFCPDPDKIDALDELMRALKKEGDSIGAKVTVVASGVPAGLGEPVFDRLDADIAHALMSINAVKGVEIGDGFDVVALRGSQNRDEITKDGFQSNHAGGILGGISSGQQIIAHMALKPTSSITVPGRTINRFGEEVEMITKGRHDPCVGIRAVPIAEAMLAIVLMDHLLRQRAQNADVKTDIPRW</sequence>
<organism>
    <name type="scientific">Escherichia coli (strain 55989 / EAEC)</name>
    <dbReference type="NCBI Taxonomy" id="585055"/>
    <lineage>
        <taxon>Bacteria</taxon>
        <taxon>Pseudomonadati</taxon>
        <taxon>Pseudomonadota</taxon>
        <taxon>Gammaproteobacteria</taxon>
        <taxon>Enterobacterales</taxon>
        <taxon>Enterobacteriaceae</taxon>
        <taxon>Escherichia</taxon>
    </lineage>
</organism>
<reference key="1">
    <citation type="journal article" date="2009" name="PLoS Genet.">
        <title>Organised genome dynamics in the Escherichia coli species results in highly diverse adaptive paths.</title>
        <authorList>
            <person name="Touchon M."/>
            <person name="Hoede C."/>
            <person name="Tenaillon O."/>
            <person name="Barbe V."/>
            <person name="Baeriswyl S."/>
            <person name="Bidet P."/>
            <person name="Bingen E."/>
            <person name="Bonacorsi S."/>
            <person name="Bouchier C."/>
            <person name="Bouvet O."/>
            <person name="Calteau A."/>
            <person name="Chiapello H."/>
            <person name="Clermont O."/>
            <person name="Cruveiller S."/>
            <person name="Danchin A."/>
            <person name="Diard M."/>
            <person name="Dossat C."/>
            <person name="Karoui M.E."/>
            <person name="Frapy E."/>
            <person name="Garry L."/>
            <person name="Ghigo J.M."/>
            <person name="Gilles A.M."/>
            <person name="Johnson J."/>
            <person name="Le Bouguenec C."/>
            <person name="Lescat M."/>
            <person name="Mangenot S."/>
            <person name="Martinez-Jehanne V."/>
            <person name="Matic I."/>
            <person name="Nassif X."/>
            <person name="Oztas S."/>
            <person name="Petit M.A."/>
            <person name="Pichon C."/>
            <person name="Rouy Z."/>
            <person name="Ruf C.S."/>
            <person name="Schneider D."/>
            <person name="Tourret J."/>
            <person name="Vacherie B."/>
            <person name="Vallenet D."/>
            <person name="Medigue C."/>
            <person name="Rocha E.P.C."/>
            <person name="Denamur E."/>
        </authorList>
    </citation>
    <scope>NUCLEOTIDE SEQUENCE [LARGE SCALE GENOMIC DNA]</scope>
    <source>
        <strain>55989 / EAEC</strain>
    </source>
</reference>
<name>AROC_ECO55</name>